<name>MATA_BPFR</name>
<protein>
    <recommendedName>
        <fullName>Maturation protein A</fullName>
        <shortName>MP</shortName>
    </recommendedName>
    <alternativeName>
        <fullName>Assembly protein</fullName>
        <shortName>A protein</shortName>
    </alternativeName>
</protein>
<proteinExistence type="evidence at transcript level"/>
<comment type="function">
    <text evidence="1">The maturation protein is required for the typical attachment of the phage to the side of the bacterial F-pili. Binds to sequences located toward each end of the genome, hence circularizing it. The RNA genome-maturation protein A complex is released from the capsid upon host receptor binding. Maturation protein A enters the cell along with the viral RNA.</text>
</comment>
<comment type="subunit">
    <text evidence="1">Interacts with the host pilus.</text>
</comment>
<comment type="subcellular location">
    <subcellularLocation>
        <location evidence="1">Virion</location>
    </subcellularLocation>
    <text evidence="1">A single copy of the maturation protein is present in the virion and replaces a coat protein dimer at one of the icosahedral two-fold axes.</text>
</comment>
<comment type="PTM">
    <text evidence="1">During internalization, MP is proteolytically cleaved into two fragments allowing translation and replication to start.</text>
</comment>
<comment type="similarity">
    <text evidence="2">Belongs to the Leviviricetes maturation protein family.</text>
</comment>
<dbReference type="EMBL" id="X15031">
    <property type="protein sequence ID" value="CAA33135.1"/>
    <property type="molecule type" value="mRNA"/>
</dbReference>
<dbReference type="EMBL" id="M31635">
    <property type="protein sequence ID" value="AAA32188.1"/>
    <property type="molecule type" value="Genomic_RNA"/>
</dbReference>
<dbReference type="PIR" id="S08017">
    <property type="entry name" value="S08017"/>
</dbReference>
<dbReference type="SMR" id="P15966"/>
<dbReference type="Proteomes" id="UP000002582">
    <property type="component" value="Genome"/>
</dbReference>
<dbReference type="GO" id="GO:0044423">
    <property type="term" value="C:virion component"/>
    <property type="evidence" value="ECO:0007669"/>
    <property type="project" value="UniProtKB-KW"/>
</dbReference>
<dbReference type="GO" id="GO:0003723">
    <property type="term" value="F:RNA binding"/>
    <property type="evidence" value="ECO:0007669"/>
    <property type="project" value="UniProtKB-KW"/>
</dbReference>
<dbReference type="GO" id="GO:0099009">
    <property type="term" value="P:viral genome circularization"/>
    <property type="evidence" value="ECO:0007669"/>
    <property type="project" value="UniProtKB-KW"/>
</dbReference>
<dbReference type="GO" id="GO:0039666">
    <property type="term" value="P:virion attachment to host cell pilus"/>
    <property type="evidence" value="ECO:0007669"/>
    <property type="project" value="UniProtKB-KW"/>
</dbReference>
<dbReference type="InterPro" id="IPR005563">
    <property type="entry name" value="A_protein"/>
</dbReference>
<dbReference type="Pfam" id="PF03863">
    <property type="entry name" value="Phage_mat-A"/>
    <property type="match status" value="1"/>
</dbReference>
<evidence type="ECO:0000250" key="1">
    <source>
        <dbReference type="UniProtKB" id="P03610"/>
    </source>
</evidence>
<evidence type="ECO:0000305" key="2"/>
<gene>
    <name type="primary">A</name>
</gene>
<reference key="1">
    <citation type="journal article" date="1990" name="Biochim. Biophys. Acta">
        <title>Complete nucleotide sequence of the group I RNA bacteriophage fr.</title>
        <authorList>
            <person name="Adhin M.R."/>
            <person name="Avots A.J."/>
            <person name="Berzin V.M."/>
            <person name="Overbeek G.P."/>
            <person name="van Duin J."/>
        </authorList>
    </citation>
    <scope>NUCLEOTIDE SEQUENCE [MRNA]</scope>
</reference>
<reference key="2">
    <citation type="journal article" date="1987" name="Nucleic Acids Res.">
        <title>Sequence of the genes coding for the A-protein and coat protein of bacteriophage fr.</title>
        <authorList>
            <person name="Berzin V.M."/>
            <person name="Avots A.J."/>
            <person name="Jansone I.V."/>
            <person name="Gintnere L."/>
            <person name="Tsimanis A.J."/>
        </authorList>
    </citation>
    <scope>NUCLEOTIDE SEQUENCE [MRNA]</scope>
</reference>
<organismHost>
    <name type="scientific">Escherichia coli</name>
    <dbReference type="NCBI Taxonomy" id="562"/>
</organismHost>
<accession>P15966</accession>
<keyword id="KW-0945">Host-virus interaction</keyword>
<keyword id="KW-0694">RNA-binding</keyword>
<keyword id="KW-1161">Viral attachment to host cell</keyword>
<keyword id="KW-1175">Viral attachment to host cell pilus</keyword>
<keyword id="KW-1253">Viral genome circularization</keyword>
<keyword id="KW-1162">Viral penetration into host cytoplasm</keyword>
<keyword id="KW-0946">Virion</keyword>
<keyword id="KW-1160">Virus entry into host cell</keyword>
<feature type="chain" id="PRO_0000164857" description="Maturation protein A">
    <location>
        <begin position="1"/>
        <end position="393"/>
    </location>
</feature>
<feature type="region of interest" description="Viral RNA-binding" evidence="1">
    <location>
        <begin position="26"/>
        <end position="233"/>
    </location>
</feature>
<feature type="sequence conflict" description="In Ref. 2; AAA32188." evidence="2" ref="2">
    <original>R</original>
    <variation>S</variation>
    <location>
        <position position="232"/>
    </location>
</feature>
<feature type="sequence conflict" description="In Ref. 2; AAA32188." evidence="2" ref="2">
    <original>T</original>
    <variation>I</variation>
    <location>
        <position position="334"/>
    </location>
</feature>
<sequence length="393" mass="43956">MRKFIPTERMSKSHVVSVREYADGELEDNSLPLIYRSNWSPGQYTSTGPRTKEWHYPSSYSRGAIGIKALDQGKYARLGTSWGREFEERAGYGMSIDARSCYSLFPVSQNLTWIDVPTNVANRATTEVLGKVTQGNFNLGVALAEARSTASQLSTQTIALIKAYTAARRGNWRQALRYLALNENRKFNSKSVASRWLELQFGWMPLLSDIQGAYEMLTKVHLKAFMPMRAVRQVGQNVSLSGRLTSPAASYKSTCNISRRIVIWFYINDARLAWLSSLGILNPLGIVWEKVPFSFLVDWLLPVGNMLEGLTAPIGCSYQSGTVTDVISGESTITADDIYGWDTVRPATAKVQISAVHRGVQSVWPTTGVYVKSPFSMVHTLDALALFRQRLWK</sequence>
<organism>
    <name type="scientific">Enterobacteria phage fr</name>
    <name type="common">Bacteriophage fr</name>
    <dbReference type="NCBI Taxonomy" id="12017"/>
    <lineage>
        <taxon>Viruses</taxon>
        <taxon>Riboviria</taxon>
        <taxon>Orthornavirae</taxon>
        <taxon>Lenarviricota</taxon>
        <taxon>Leviviricetes</taxon>
        <taxon>Norzivirales</taxon>
        <taxon>Fiersviridae</taxon>
        <taxon>Emesvirus</taxon>
        <taxon>Emesvirus zinderi</taxon>
    </lineage>
</organism>